<dbReference type="EC" id="1.3.8.4"/>
<dbReference type="EMBL" id="Y12695">
    <property type="protein sequence ID" value="CAA73227.1"/>
    <property type="molecule type" value="mRNA"/>
</dbReference>
<dbReference type="EMBL" id="AF160729">
    <property type="protein sequence ID" value="AAD45605.1"/>
    <property type="molecule type" value="mRNA"/>
</dbReference>
<dbReference type="EMBL" id="AL132953">
    <property type="protein sequence ID" value="CAB72479.1"/>
    <property type="molecule type" value="Genomic_DNA"/>
</dbReference>
<dbReference type="EMBL" id="CP002686">
    <property type="protein sequence ID" value="AEE78020.1"/>
    <property type="molecule type" value="Genomic_DNA"/>
</dbReference>
<dbReference type="EMBL" id="AY062567">
    <property type="protein sequence ID" value="AAL32645.1"/>
    <property type="molecule type" value="mRNA"/>
</dbReference>
<dbReference type="EMBL" id="AY128799">
    <property type="protein sequence ID" value="AAM91199.1"/>
    <property type="molecule type" value="mRNA"/>
</dbReference>
<dbReference type="EMBL" id="AY087286">
    <property type="protein sequence ID" value="AAM64839.1"/>
    <property type="molecule type" value="mRNA"/>
</dbReference>
<dbReference type="PIR" id="T47470">
    <property type="entry name" value="T47470"/>
</dbReference>
<dbReference type="RefSeq" id="NP_190116.1">
    <property type="nucleotide sequence ID" value="NM_114399.5"/>
</dbReference>
<dbReference type="SMR" id="Q9SWG0"/>
<dbReference type="BioGRID" id="8988">
    <property type="interactions" value="3"/>
</dbReference>
<dbReference type="FunCoup" id="Q9SWG0">
    <property type="interactions" value="3018"/>
</dbReference>
<dbReference type="STRING" id="3702.Q9SWG0"/>
<dbReference type="PaxDb" id="3702-AT3G45300.1"/>
<dbReference type="ProteomicsDB" id="232283"/>
<dbReference type="EnsemblPlants" id="AT3G45300.1">
    <property type="protein sequence ID" value="AT3G45300.1"/>
    <property type="gene ID" value="AT3G45300"/>
</dbReference>
<dbReference type="GeneID" id="823668"/>
<dbReference type="Gramene" id="AT3G45300.1">
    <property type="protein sequence ID" value="AT3G45300.1"/>
    <property type="gene ID" value="AT3G45300"/>
</dbReference>
<dbReference type="KEGG" id="ath:AT3G45300"/>
<dbReference type="Araport" id="AT3G45300"/>
<dbReference type="TAIR" id="AT3G45300">
    <property type="gene designation" value="IVD"/>
</dbReference>
<dbReference type="eggNOG" id="KOG0141">
    <property type="taxonomic scope" value="Eukaryota"/>
</dbReference>
<dbReference type="HOGENOM" id="CLU_018204_0_1_1"/>
<dbReference type="InParanoid" id="Q9SWG0"/>
<dbReference type="OMA" id="CFITNSG"/>
<dbReference type="PhylomeDB" id="Q9SWG0"/>
<dbReference type="BioCyc" id="ARA:AT3G45300-MONOMER"/>
<dbReference type="BRENDA" id="1.3.8.4">
    <property type="organism ID" value="399"/>
</dbReference>
<dbReference type="UniPathway" id="UPA00363">
    <property type="reaction ID" value="UER00860"/>
</dbReference>
<dbReference type="PRO" id="PR:Q9SWG0"/>
<dbReference type="Proteomes" id="UP000006548">
    <property type="component" value="Chromosome 3"/>
</dbReference>
<dbReference type="ExpressionAtlas" id="Q9SWG0">
    <property type="expression patterns" value="baseline and differential"/>
</dbReference>
<dbReference type="GO" id="GO:0005829">
    <property type="term" value="C:cytosol"/>
    <property type="evidence" value="ECO:0007005"/>
    <property type="project" value="TAIR"/>
</dbReference>
<dbReference type="GO" id="GO:0005759">
    <property type="term" value="C:mitochondrial matrix"/>
    <property type="evidence" value="ECO:0000314"/>
    <property type="project" value="TAIR"/>
</dbReference>
<dbReference type="GO" id="GO:0005739">
    <property type="term" value="C:mitochondrion"/>
    <property type="evidence" value="ECO:0000314"/>
    <property type="project" value="TAIR"/>
</dbReference>
<dbReference type="GO" id="GO:0008470">
    <property type="term" value="F:3-methylbutanoyl-CoA dehydrogenase activity"/>
    <property type="evidence" value="ECO:0000314"/>
    <property type="project" value="TAIR"/>
</dbReference>
<dbReference type="GO" id="GO:0005524">
    <property type="term" value="F:ATP binding"/>
    <property type="evidence" value="ECO:0007005"/>
    <property type="project" value="TAIR"/>
</dbReference>
<dbReference type="GO" id="GO:0050660">
    <property type="term" value="F:flavin adenine dinucleotide binding"/>
    <property type="evidence" value="ECO:0007669"/>
    <property type="project" value="InterPro"/>
</dbReference>
<dbReference type="GO" id="GO:0010230">
    <property type="term" value="P:alternative respiration"/>
    <property type="evidence" value="ECO:0000315"/>
    <property type="project" value="TAIR"/>
</dbReference>
<dbReference type="GO" id="GO:0009083">
    <property type="term" value="P:branched-chain amino acid catabolic process"/>
    <property type="evidence" value="ECO:0000315"/>
    <property type="project" value="TAIR"/>
</dbReference>
<dbReference type="GO" id="GO:0006552">
    <property type="term" value="P:L-leucine catabolic process"/>
    <property type="evidence" value="ECO:0000314"/>
    <property type="project" value="TAIR"/>
</dbReference>
<dbReference type="CDD" id="cd01156">
    <property type="entry name" value="IVD"/>
    <property type="match status" value="1"/>
</dbReference>
<dbReference type="FunFam" id="1.10.540.10:FF:000007">
    <property type="entry name" value="Isovaleryl-CoA dehydrogenase, mitochondrial"/>
    <property type="match status" value="1"/>
</dbReference>
<dbReference type="FunFam" id="2.40.110.10:FF:000004">
    <property type="entry name" value="Isovaleryl-CoA dehydrogenase, mitochondrial"/>
    <property type="match status" value="1"/>
</dbReference>
<dbReference type="FunFam" id="1.20.140.10:FF:000003">
    <property type="entry name" value="isovaleryl-CoA dehydrogenase, mitochondrial"/>
    <property type="match status" value="1"/>
</dbReference>
<dbReference type="Gene3D" id="1.10.540.10">
    <property type="entry name" value="Acyl-CoA dehydrogenase/oxidase, N-terminal domain"/>
    <property type="match status" value="1"/>
</dbReference>
<dbReference type="Gene3D" id="2.40.110.10">
    <property type="entry name" value="Butyryl-CoA Dehydrogenase, subunit A, domain 2"/>
    <property type="match status" value="1"/>
</dbReference>
<dbReference type="Gene3D" id="1.20.140.10">
    <property type="entry name" value="Butyryl-CoA Dehydrogenase, subunit A, domain 3"/>
    <property type="match status" value="1"/>
</dbReference>
<dbReference type="InterPro" id="IPR006089">
    <property type="entry name" value="Acyl-CoA_DH_CS"/>
</dbReference>
<dbReference type="InterPro" id="IPR006091">
    <property type="entry name" value="Acyl-CoA_Oxase/DH_mid-dom"/>
</dbReference>
<dbReference type="InterPro" id="IPR046373">
    <property type="entry name" value="Acyl-CoA_Oxase/DH_mid-dom_sf"/>
</dbReference>
<dbReference type="InterPro" id="IPR036250">
    <property type="entry name" value="AcylCo_DH-like_C"/>
</dbReference>
<dbReference type="InterPro" id="IPR009075">
    <property type="entry name" value="AcylCo_DH/oxidase_C"/>
</dbReference>
<dbReference type="InterPro" id="IPR013786">
    <property type="entry name" value="AcylCoA_DH/ox_N"/>
</dbReference>
<dbReference type="InterPro" id="IPR037069">
    <property type="entry name" value="AcylCoA_DH/ox_N_sf"/>
</dbReference>
<dbReference type="InterPro" id="IPR009100">
    <property type="entry name" value="AcylCoA_DH/oxidase_NM_dom_sf"/>
</dbReference>
<dbReference type="InterPro" id="IPR034183">
    <property type="entry name" value="IVD"/>
</dbReference>
<dbReference type="PANTHER" id="PTHR43884">
    <property type="entry name" value="ACYL-COA DEHYDROGENASE"/>
    <property type="match status" value="1"/>
</dbReference>
<dbReference type="PANTHER" id="PTHR43884:SF12">
    <property type="entry name" value="ISOVALERYL-COA DEHYDROGENASE, MITOCHONDRIAL-RELATED"/>
    <property type="match status" value="1"/>
</dbReference>
<dbReference type="Pfam" id="PF00441">
    <property type="entry name" value="Acyl-CoA_dh_1"/>
    <property type="match status" value="1"/>
</dbReference>
<dbReference type="Pfam" id="PF02770">
    <property type="entry name" value="Acyl-CoA_dh_M"/>
    <property type="match status" value="1"/>
</dbReference>
<dbReference type="Pfam" id="PF02771">
    <property type="entry name" value="Acyl-CoA_dh_N"/>
    <property type="match status" value="1"/>
</dbReference>
<dbReference type="PIRSF" id="PIRSF016578">
    <property type="entry name" value="HsaA"/>
    <property type="match status" value="1"/>
</dbReference>
<dbReference type="SUPFAM" id="SSF47203">
    <property type="entry name" value="Acyl-CoA dehydrogenase C-terminal domain-like"/>
    <property type="match status" value="1"/>
</dbReference>
<dbReference type="SUPFAM" id="SSF56645">
    <property type="entry name" value="Acyl-CoA dehydrogenase NM domain-like"/>
    <property type="match status" value="1"/>
</dbReference>
<dbReference type="PROSITE" id="PS00072">
    <property type="entry name" value="ACYL_COA_DH_1"/>
    <property type="match status" value="1"/>
</dbReference>
<dbReference type="PROSITE" id="PS00073">
    <property type="entry name" value="ACYL_COA_DH_2"/>
    <property type="match status" value="1"/>
</dbReference>
<keyword id="KW-0274">FAD</keyword>
<keyword id="KW-0285">Flavoprotein</keyword>
<keyword id="KW-0496">Mitochondrion</keyword>
<keyword id="KW-0560">Oxidoreductase</keyword>
<keyword id="KW-1185">Reference proteome</keyword>
<keyword id="KW-0809">Transit peptide</keyword>
<feature type="transit peptide" description="Mitochondrion" evidence="6">
    <location>
        <begin position="1"/>
        <end position="22"/>
    </location>
</feature>
<feature type="chain" id="PRO_0000000535" description="Isovaleryl-CoA dehydrogenase, mitochondrial">
    <location>
        <begin position="23"/>
        <end position="409"/>
    </location>
</feature>
<feature type="active site" description="Proton acceptor" evidence="1">
    <location>
        <position position="270"/>
    </location>
</feature>
<feature type="binding site" evidence="1">
    <location>
        <begin position="151"/>
        <end position="160"/>
    </location>
    <ligand>
        <name>FAD</name>
        <dbReference type="ChEBI" id="CHEBI:57692"/>
    </ligand>
</feature>
<feature type="binding site" evidence="1">
    <location>
        <position position="160"/>
    </location>
    <ligand>
        <name>substrate</name>
    </ligand>
</feature>
<feature type="binding site" evidence="1">
    <location>
        <begin position="184"/>
        <end position="186"/>
    </location>
    <ligand>
        <name>FAD</name>
        <dbReference type="ChEBI" id="CHEBI:57692"/>
    </ligand>
</feature>
<feature type="binding site" evidence="1">
    <location>
        <begin position="206"/>
        <end position="207"/>
    </location>
    <ligand>
        <name>substrate</name>
    </ligand>
</feature>
<feature type="binding site" evidence="1">
    <location>
        <position position="261"/>
    </location>
    <ligand>
        <name>substrate</name>
    </ligand>
</feature>
<feature type="binding site" evidence="1">
    <location>
        <begin position="268"/>
        <end position="271"/>
    </location>
    <ligand>
        <name>substrate</name>
    </ligand>
</feature>
<feature type="binding site" evidence="1">
    <location>
        <position position="296"/>
    </location>
    <ligand>
        <name>FAD</name>
        <dbReference type="ChEBI" id="CHEBI:57692"/>
    </ligand>
</feature>
<feature type="binding site" evidence="1">
    <location>
        <position position="307"/>
    </location>
    <ligand>
        <name>FAD</name>
        <dbReference type="ChEBI" id="CHEBI:57692"/>
    </ligand>
</feature>
<feature type="binding site" evidence="1">
    <location>
        <begin position="364"/>
        <end position="368"/>
    </location>
    <ligand>
        <name>FAD</name>
        <dbReference type="ChEBI" id="CHEBI:57692"/>
    </ligand>
</feature>
<feature type="binding site" evidence="1">
    <location>
        <begin position="391"/>
        <end position="392"/>
    </location>
    <ligand>
        <name>substrate</name>
    </ligand>
</feature>
<feature type="binding site" evidence="1">
    <location>
        <begin position="393"/>
        <end position="395"/>
    </location>
    <ligand>
        <name>FAD</name>
        <dbReference type="ChEBI" id="CHEBI:57692"/>
    </ligand>
</feature>
<feature type="sequence conflict" description="In Ref. 2; AAD45605 and 6; AAM64839." evidence="6" ref="2 6">
    <original>N</original>
    <variation>I</variation>
    <location>
        <position position="49"/>
    </location>
</feature>
<feature type="sequence conflict" description="In Ref. 5; AAL32645/AAM91199." evidence="6" ref="5">
    <original>M</original>
    <variation>V</variation>
    <location>
        <position position="282"/>
    </location>
</feature>
<evidence type="ECO:0000250" key="1">
    <source>
        <dbReference type="UniProtKB" id="P26440"/>
    </source>
</evidence>
<evidence type="ECO:0000269" key="2">
    <source>
    </source>
</evidence>
<evidence type="ECO:0000269" key="3">
    <source>
    </source>
</evidence>
<evidence type="ECO:0000269" key="4">
    <source>
    </source>
</evidence>
<evidence type="ECO:0000269" key="5">
    <source>
    </source>
</evidence>
<evidence type="ECO:0000305" key="6"/>
<evidence type="ECO:0000312" key="7">
    <source>
        <dbReference type="EMBL" id="AAD45605.1"/>
    </source>
</evidence>
<evidence type="ECO:0000312" key="8">
    <source>
        <dbReference type="EMBL" id="CAB72479.1"/>
    </source>
</evidence>
<protein>
    <recommendedName>
        <fullName>Isovaleryl-CoA dehydrogenase, mitochondrial</fullName>
        <shortName>IVD</shortName>
        <ecNumber>1.3.8.4</ecNumber>
    </recommendedName>
</protein>
<comment type="function">
    <text evidence="5">Involved in degradation of the branched-chain amino acids, phytol and lysine for the supply of carbon and electrons to the ETF/ETFQO complex during dark-induced sugar starvation.</text>
</comment>
<comment type="catalytic activity">
    <reaction evidence="3">
        <text>3-methylbutanoyl-CoA + oxidized [electron-transfer flavoprotein] + H(+) = 3-methylbut-2-enoyl-CoA + reduced [electron-transfer flavoprotein]</text>
        <dbReference type="Rhea" id="RHEA:12276"/>
        <dbReference type="Rhea" id="RHEA-COMP:10685"/>
        <dbReference type="Rhea" id="RHEA-COMP:10686"/>
        <dbReference type="ChEBI" id="CHEBI:15378"/>
        <dbReference type="ChEBI" id="CHEBI:57344"/>
        <dbReference type="ChEBI" id="CHEBI:57345"/>
        <dbReference type="ChEBI" id="CHEBI:57692"/>
        <dbReference type="ChEBI" id="CHEBI:58307"/>
        <dbReference type="EC" id="1.3.8.4"/>
    </reaction>
</comment>
<comment type="cofactor">
    <cofactor evidence="1">
        <name>FAD</name>
        <dbReference type="ChEBI" id="CHEBI:57692"/>
    </cofactor>
</comment>
<comment type="pathway">
    <text>Amino-acid degradation; L-leucine degradation; (S)-3-hydroxy-3-methylglutaryl-CoA from 3-isovaleryl-CoA: step 1/3.</text>
</comment>
<comment type="subunit">
    <text evidence="3">Homodimer.</text>
</comment>
<comment type="subcellular location">
    <subcellularLocation>
        <location evidence="2 4">Mitochondrion</location>
    </subcellularLocation>
</comment>
<comment type="tissue specificity">
    <text evidence="3">Expressed in leaves, stems and flowers. Not detected in roots.</text>
</comment>
<comment type="disruption phenotype">
    <text evidence="5">No visible phenotype under normal growth conditions.</text>
</comment>
<comment type="similarity">
    <text evidence="6">Belongs to the acyl-CoA dehydrogenase family.</text>
</comment>
<proteinExistence type="evidence at protein level"/>
<organism evidence="7">
    <name type="scientific">Arabidopsis thaliana</name>
    <name type="common">Mouse-ear cress</name>
    <dbReference type="NCBI Taxonomy" id="3702"/>
    <lineage>
        <taxon>Eukaryota</taxon>
        <taxon>Viridiplantae</taxon>
        <taxon>Streptophyta</taxon>
        <taxon>Embryophyta</taxon>
        <taxon>Tracheophyta</taxon>
        <taxon>Spermatophyta</taxon>
        <taxon>Magnoliopsida</taxon>
        <taxon>eudicotyledons</taxon>
        <taxon>Gunneridae</taxon>
        <taxon>Pentapetalae</taxon>
        <taxon>rosids</taxon>
        <taxon>malvids</taxon>
        <taxon>Brassicales</taxon>
        <taxon>Brassicaceae</taxon>
        <taxon>Camelineae</taxon>
        <taxon>Arabidopsis</taxon>
    </lineage>
</organism>
<sequence>MQRFFSARSILGYAVKTRRRSFSSRSSSLLFDDTQLQFKESVSKFAQDNIAPHAERIDKTNSFPKDVNLWKLMGEFNLHGITAPEEYGGLGLGYLYHCIAMEEISRASGSVALSYGAHSNLCINQLVRNGTAAQKEKYLPKLISGEHVGALAMSEPNAGSDVVGMKCKAEKVDGGYILNGNKMWCTNGPSAETLVVYAKTDTKAGSKGITAFIIEKGMTGFSTAQKLDKLGMRGSDTCELVFENCFVPEENILDKEGKGVYVLMSGLDLERLVLAAGPLGIMQACLDNVLPYIRQREQFGRPVGEFQFIQGKVADMYTALQSSRSYVYSVARDCDNGKVDPKDCAGTILCAAERATQVALQAIQCLGGNGYINEYATGRLLRDAKLYEIGAGTSEIRRIVIGRELFKEE</sequence>
<gene>
    <name type="primary">IVD</name>
    <name type="ordered locus">At3g45300</name>
    <name type="ORF">F18N11.6</name>
</gene>
<name>IVD_ARATH</name>
<reference evidence="6" key="1">
    <citation type="journal article" date="1999" name="Plant Mol. Biol.">
        <title>In plants a putative isovaleryl-CoA-dehydrogenase is located in mitochondria.</title>
        <authorList>
            <person name="Daeschner K."/>
            <person name="Thalheim C."/>
            <person name="Guha C."/>
            <person name="Brennicke A."/>
            <person name="Binder S."/>
        </authorList>
    </citation>
    <scope>NUCLEOTIDE SEQUENCE [MRNA]</scope>
    <scope>SUBCELLULAR LOCATION</scope>
</reference>
<reference evidence="6" key="2">
    <citation type="journal article" date="2001" name="Eur. J. Biochem.">
        <title>Purification, characterization and cloning of isovaleryl-CoA dehydrogenase from higher plant mitochondria.</title>
        <authorList>
            <person name="Faivre-Nitschke S.E."/>
            <person name="Couee I."/>
            <person name="Vermel M."/>
            <person name="Grienenberger J.-M."/>
            <person name="Gualberto J.M."/>
        </authorList>
    </citation>
    <scope>NUCLEOTIDE SEQUENCE [MRNA]</scope>
    <scope>SUBUNIT</scope>
    <scope>CATALYTIC ACTIVITY</scope>
    <scope>TISSUE SPECIFICITY</scope>
    <source>
        <strain>cv. Columbia</strain>
    </source>
</reference>
<reference key="3">
    <citation type="journal article" date="2000" name="Nature">
        <title>Sequence and analysis of chromosome 3 of the plant Arabidopsis thaliana.</title>
        <authorList>
            <person name="Salanoubat M."/>
            <person name="Lemcke K."/>
            <person name="Rieger M."/>
            <person name="Ansorge W."/>
            <person name="Unseld M."/>
            <person name="Fartmann B."/>
            <person name="Valle G."/>
            <person name="Bloecker H."/>
            <person name="Perez-Alonso M."/>
            <person name="Obermaier B."/>
            <person name="Delseny M."/>
            <person name="Boutry M."/>
            <person name="Grivell L.A."/>
            <person name="Mache R."/>
            <person name="Puigdomenech P."/>
            <person name="De Simone V."/>
            <person name="Choisne N."/>
            <person name="Artiguenave F."/>
            <person name="Robert C."/>
            <person name="Brottier P."/>
            <person name="Wincker P."/>
            <person name="Cattolico L."/>
            <person name="Weissenbach J."/>
            <person name="Saurin W."/>
            <person name="Quetier F."/>
            <person name="Schaefer M."/>
            <person name="Mueller-Auer S."/>
            <person name="Gabel C."/>
            <person name="Fuchs M."/>
            <person name="Benes V."/>
            <person name="Wurmbach E."/>
            <person name="Drzonek H."/>
            <person name="Erfle H."/>
            <person name="Jordan N."/>
            <person name="Bangert S."/>
            <person name="Wiedelmann R."/>
            <person name="Kranz H."/>
            <person name="Voss H."/>
            <person name="Holland R."/>
            <person name="Brandt P."/>
            <person name="Nyakatura G."/>
            <person name="Vezzi A."/>
            <person name="D'Angelo M."/>
            <person name="Pallavicini A."/>
            <person name="Toppo S."/>
            <person name="Simionati B."/>
            <person name="Conrad A."/>
            <person name="Hornischer K."/>
            <person name="Kauer G."/>
            <person name="Loehnert T.-H."/>
            <person name="Nordsiek G."/>
            <person name="Reichelt J."/>
            <person name="Scharfe M."/>
            <person name="Schoen O."/>
            <person name="Bargues M."/>
            <person name="Terol J."/>
            <person name="Climent J."/>
            <person name="Navarro P."/>
            <person name="Collado C."/>
            <person name="Perez-Perez A."/>
            <person name="Ottenwaelder B."/>
            <person name="Duchemin D."/>
            <person name="Cooke R."/>
            <person name="Laudie M."/>
            <person name="Berger-Llauro C."/>
            <person name="Purnelle B."/>
            <person name="Masuy D."/>
            <person name="de Haan M."/>
            <person name="Maarse A.C."/>
            <person name="Alcaraz J.-P."/>
            <person name="Cottet A."/>
            <person name="Casacuberta E."/>
            <person name="Monfort A."/>
            <person name="Argiriou A."/>
            <person name="Flores M."/>
            <person name="Liguori R."/>
            <person name="Vitale D."/>
            <person name="Mannhaupt G."/>
            <person name="Haase D."/>
            <person name="Schoof H."/>
            <person name="Rudd S."/>
            <person name="Zaccaria P."/>
            <person name="Mewes H.-W."/>
            <person name="Mayer K.F.X."/>
            <person name="Kaul S."/>
            <person name="Town C.D."/>
            <person name="Koo H.L."/>
            <person name="Tallon L.J."/>
            <person name="Jenkins J."/>
            <person name="Rooney T."/>
            <person name="Rizzo M."/>
            <person name="Walts A."/>
            <person name="Utterback T."/>
            <person name="Fujii C.Y."/>
            <person name="Shea T.P."/>
            <person name="Creasy T.H."/>
            <person name="Haas B."/>
            <person name="Maiti R."/>
            <person name="Wu D."/>
            <person name="Peterson J."/>
            <person name="Van Aken S."/>
            <person name="Pai G."/>
            <person name="Militscher J."/>
            <person name="Sellers P."/>
            <person name="Gill J.E."/>
            <person name="Feldblyum T.V."/>
            <person name="Preuss D."/>
            <person name="Lin X."/>
            <person name="Nierman W.C."/>
            <person name="Salzberg S.L."/>
            <person name="White O."/>
            <person name="Venter J.C."/>
            <person name="Fraser C.M."/>
            <person name="Kaneko T."/>
            <person name="Nakamura Y."/>
            <person name="Sato S."/>
            <person name="Kato T."/>
            <person name="Asamizu E."/>
            <person name="Sasamoto S."/>
            <person name="Kimura T."/>
            <person name="Idesawa K."/>
            <person name="Kawashima K."/>
            <person name="Kishida Y."/>
            <person name="Kiyokawa C."/>
            <person name="Kohara M."/>
            <person name="Matsumoto M."/>
            <person name="Matsuno A."/>
            <person name="Muraki A."/>
            <person name="Nakayama S."/>
            <person name="Nakazaki N."/>
            <person name="Shinpo S."/>
            <person name="Takeuchi C."/>
            <person name="Wada T."/>
            <person name="Watanabe A."/>
            <person name="Yamada M."/>
            <person name="Yasuda M."/>
            <person name="Tabata S."/>
        </authorList>
    </citation>
    <scope>NUCLEOTIDE SEQUENCE [LARGE SCALE GENOMIC DNA]</scope>
    <source>
        <strain>cv. Columbia</strain>
    </source>
</reference>
<reference evidence="8" key="4">
    <citation type="journal article" date="2017" name="Plant J.">
        <title>Araport11: a complete reannotation of the Arabidopsis thaliana reference genome.</title>
        <authorList>
            <person name="Cheng C.Y."/>
            <person name="Krishnakumar V."/>
            <person name="Chan A.P."/>
            <person name="Thibaud-Nissen F."/>
            <person name="Schobel S."/>
            <person name="Town C.D."/>
        </authorList>
    </citation>
    <scope>GENOME REANNOTATION</scope>
    <source>
        <strain>cv. Columbia</strain>
    </source>
</reference>
<reference key="5">
    <citation type="journal article" date="2003" name="Science">
        <title>Empirical analysis of transcriptional activity in the Arabidopsis genome.</title>
        <authorList>
            <person name="Yamada K."/>
            <person name="Lim J."/>
            <person name="Dale J.M."/>
            <person name="Chen H."/>
            <person name="Shinn P."/>
            <person name="Palm C.J."/>
            <person name="Southwick A.M."/>
            <person name="Wu H.C."/>
            <person name="Kim C.J."/>
            <person name="Nguyen M."/>
            <person name="Pham P.K."/>
            <person name="Cheuk R.F."/>
            <person name="Karlin-Newmann G."/>
            <person name="Liu S.X."/>
            <person name="Lam B."/>
            <person name="Sakano H."/>
            <person name="Wu T."/>
            <person name="Yu G."/>
            <person name="Miranda M."/>
            <person name="Quach H.L."/>
            <person name="Tripp M."/>
            <person name="Chang C.H."/>
            <person name="Lee J.M."/>
            <person name="Toriumi M.J."/>
            <person name="Chan M.M."/>
            <person name="Tang C.C."/>
            <person name="Onodera C.S."/>
            <person name="Deng J.M."/>
            <person name="Akiyama K."/>
            <person name="Ansari Y."/>
            <person name="Arakawa T."/>
            <person name="Banh J."/>
            <person name="Banno F."/>
            <person name="Bowser L."/>
            <person name="Brooks S.Y."/>
            <person name="Carninci P."/>
            <person name="Chao Q."/>
            <person name="Choy N."/>
            <person name="Enju A."/>
            <person name="Goldsmith A.D."/>
            <person name="Gurjal M."/>
            <person name="Hansen N.F."/>
            <person name="Hayashizaki Y."/>
            <person name="Johnson-Hopson C."/>
            <person name="Hsuan V.W."/>
            <person name="Iida K."/>
            <person name="Karnes M."/>
            <person name="Khan S."/>
            <person name="Koesema E."/>
            <person name="Ishida J."/>
            <person name="Jiang P.X."/>
            <person name="Jones T."/>
            <person name="Kawai J."/>
            <person name="Kamiya A."/>
            <person name="Meyers C."/>
            <person name="Nakajima M."/>
            <person name="Narusaka M."/>
            <person name="Seki M."/>
            <person name="Sakurai T."/>
            <person name="Satou M."/>
            <person name="Tamse R."/>
            <person name="Vaysberg M."/>
            <person name="Wallender E.K."/>
            <person name="Wong C."/>
            <person name="Yamamura Y."/>
            <person name="Yuan S."/>
            <person name="Shinozaki K."/>
            <person name="Davis R.W."/>
            <person name="Theologis A."/>
            <person name="Ecker J.R."/>
        </authorList>
    </citation>
    <scope>NUCLEOTIDE SEQUENCE [LARGE SCALE MRNA]</scope>
    <source>
        <strain>cv. Columbia</strain>
    </source>
</reference>
<reference evidence="8" key="6">
    <citation type="submission" date="2002-03" db="EMBL/GenBank/DDBJ databases">
        <title>Full-length cDNA from Arabidopsis thaliana.</title>
        <authorList>
            <person name="Brover V.V."/>
            <person name="Troukhan M.E."/>
            <person name="Alexandrov N.A."/>
            <person name="Lu Y.-P."/>
            <person name="Flavell R.B."/>
            <person name="Feldmann K.A."/>
        </authorList>
    </citation>
    <scope>NUCLEOTIDE SEQUENCE [LARGE SCALE MRNA]</scope>
</reference>
<reference key="7">
    <citation type="journal article" date="2004" name="Plant Cell">
        <title>Experimental analysis of the Arabidopsis mitochondrial proteome highlights signaling and regulatory components, provides assessment of targeting prediction programs, and indicates plant-specific mitochondrial proteins.</title>
        <authorList>
            <person name="Heazlewood J.L."/>
            <person name="Tonti-Filippini J.S."/>
            <person name="Gout A.M."/>
            <person name="Day D.A."/>
            <person name="Whelan J."/>
            <person name="Millar A.H."/>
        </authorList>
    </citation>
    <scope>IDENTIFICATION BY MASS SPECTROMETRY</scope>
    <scope>SUBCELLULAR LOCATION [LARGE SCALE ANALYSIS]</scope>
    <source>
        <strain>cv. Landsberg erecta</strain>
    </source>
</reference>
<reference key="8">
    <citation type="journal article" date="2010" name="Plant Cell">
        <title>Identification of the 2-hydroxyglutarate and isovaleryl-CoA dehydrogenases as alternative electron donors linking lysine catabolism to the electron transport chain of Arabidopsis mitochondria.</title>
        <authorList>
            <person name="Araujo W.L."/>
            <person name="Ishizaki K."/>
            <person name="Nunes-Nesi A."/>
            <person name="Larson T.R."/>
            <person name="Tohge T."/>
            <person name="Krahnert I."/>
            <person name="Witt S."/>
            <person name="Obata T."/>
            <person name="Schauer N."/>
            <person name="Graham I.A."/>
            <person name="Leaver C.J."/>
            <person name="Fernie A.R."/>
        </authorList>
    </citation>
    <scope>FUNCTION</scope>
    <scope>DISRUPTION PHENOTYPE</scope>
</reference>
<accession>Q9SWG0</accession>
<accession>Q8W4G7</accession>
<accession>Q9XFT2</accession>